<accession>B9DLD0</accession>
<comment type="function">
    <text evidence="1">Specifically dimethylates two adjacent adenosines (A1518 and A1519) in the loop of a conserved hairpin near the 3'-end of 16S rRNA in the 30S particle. May play a critical role in biogenesis of 30S subunits.</text>
</comment>
<comment type="catalytic activity">
    <reaction evidence="1">
        <text>adenosine(1518)/adenosine(1519) in 16S rRNA + 4 S-adenosyl-L-methionine = N(6)-dimethyladenosine(1518)/N(6)-dimethyladenosine(1519) in 16S rRNA + 4 S-adenosyl-L-homocysteine + 4 H(+)</text>
        <dbReference type="Rhea" id="RHEA:19609"/>
        <dbReference type="Rhea" id="RHEA-COMP:10232"/>
        <dbReference type="Rhea" id="RHEA-COMP:10233"/>
        <dbReference type="ChEBI" id="CHEBI:15378"/>
        <dbReference type="ChEBI" id="CHEBI:57856"/>
        <dbReference type="ChEBI" id="CHEBI:59789"/>
        <dbReference type="ChEBI" id="CHEBI:74411"/>
        <dbReference type="ChEBI" id="CHEBI:74493"/>
        <dbReference type="EC" id="2.1.1.182"/>
    </reaction>
</comment>
<comment type="subcellular location">
    <subcellularLocation>
        <location evidence="1">Cytoplasm</location>
    </subcellularLocation>
</comment>
<comment type="similarity">
    <text evidence="1">Belongs to the class I-like SAM-binding methyltransferase superfamily. rRNA adenine N(6)-methyltransferase family. RsmA subfamily.</text>
</comment>
<organism>
    <name type="scientific">Staphylococcus carnosus (strain TM300)</name>
    <dbReference type="NCBI Taxonomy" id="396513"/>
    <lineage>
        <taxon>Bacteria</taxon>
        <taxon>Bacillati</taxon>
        <taxon>Bacillota</taxon>
        <taxon>Bacilli</taxon>
        <taxon>Bacillales</taxon>
        <taxon>Staphylococcaceae</taxon>
        <taxon>Staphylococcus</taxon>
    </lineage>
</organism>
<sequence length="296" mass="33539">MNKKDIATPTRTRALLDKYQFDFKKSLGQNFLIDVNIIQKIIDASNIDERTGVIEVGPGMGSLTEQLAKHAKKVVAFEIDQRLIPVLEDTLSDYDNVTVINEDILKADVVEAVQTHLSDCDKIMVVANLPYYITTPILLNLMSKSLPIDGYVVMMQKEVGERLNAEIGTKAYGSLSIVAQYYTETSKVLTVPKTVFMPPPNVDSIVVKLMKRQAPIVAVDDEDQFFKMTKAAFSQRRKTIANNYQSLFFDGKQKKYIIKTWLEDGGIDPRRRGETLSIKEFANLFNNLKKFPELEF</sequence>
<name>RSMA_STACT</name>
<reference key="1">
    <citation type="journal article" date="2009" name="Appl. Environ. Microbiol.">
        <title>Genome analysis of the meat starter culture bacterium Staphylococcus carnosus TM300.</title>
        <authorList>
            <person name="Rosenstein R."/>
            <person name="Nerz C."/>
            <person name="Biswas L."/>
            <person name="Resch A."/>
            <person name="Raddatz G."/>
            <person name="Schuster S.C."/>
            <person name="Goetz F."/>
        </authorList>
    </citation>
    <scope>NUCLEOTIDE SEQUENCE [LARGE SCALE GENOMIC DNA]</scope>
    <source>
        <strain>TM300</strain>
    </source>
</reference>
<dbReference type="EC" id="2.1.1.182" evidence="1"/>
<dbReference type="EMBL" id="AM295250">
    <property type="protein sequence ID" value="CAL27056.1"/>
    <property type="molecule type" value="Genomic_DNA"/>
</dbReference>
<dbReference type="SMR" id="B9DLD0"/>
<dbReference type="KEGG" id="sca:SCA_0143"/>
<dbReference type="eggNOG" id="COG0030">
    <property type="taxonomic scope" value="Bacteria"/>
</dbReference>
<dbReference type="HOGENOM" id="CLU_041220_0_0_9"/>
<dbReference type="BioCyc" id="SCAR396513:SCA_RS00690-MONOMER"/>
<dbReference type="Proteomes" id="UP000000444">
    <property type="component" value="Chromosome"/>
</dbReference>
<dbReference type="GO" id="GO:0005829">
    <property type="term" value="C:cytosol"/>
    <property type="evidence" value="ECO:0007669"/>
    <property type="project" value="TreeGrafter"/>
</dbReference>
<dbReference type="GO" id="GO:0052908">
    <property type="term" value="F:16S rRNA (adenine(1518)-N(6)/adenine(1519)-N(6))-dimethyltransferase activity"/>
    <property type="evidence" value="ECO:0007669"/>
    <property type="project" value="UniProtKB-EC"/>
</dbReference>
<dbReference type="GO" id="GO:0003723">
    <property type="term" value="F:RNA binding"/>
    <property type="evidence" value="ECO:0007669"/>
    <property type="project" value="UniProtKB-KW"/>
</dbReference>
<dbReference type="CDD" id="cd02440">
    <property type="entry name" value="AdoMet_MTases"/>
    <property type="match status" value="1"/>
</dbReference>
<dbReference type="FunFam" id="3.40.50.150:FF:000023">
    <property type="entry name" value="Ribosomal RNA small subunit methyltransferase A"/>
    <property type="match status" value="1"/>
</dbReference>
<dbReference type="Gene3D" id="1.10.8.100">
    <property type="entry name" value="Ribosomal RNA adenine dimethylase-like, domain 2"/>
    <property type="match status" value="1"/>
</dbReference>
<dbReference type="Gene3D" id="3.40.50.150">
    <property type="entry name" value="Vaccinia Virus protein VP39"/>
    <property type="match status" value="1"/>
</dbReference>
<dbReference type="HAMAP" id="MF_00607">
    <property type="entry name" value="16SrRNA_methyltr_A"/>
    <property type="match status" value="1"/>
</dbReference>
<dbReference type="InterPro" id="IPR001737">
    <property type="entry name" value="KsgA/Erm"/>
</dbReference>
<dbReference type="InterPro" id="IPR023165">
    <property type="entry name" value="rRNA_Ade_diMease-like_C"/>
</dbReference>
<dbReference type="InterPro" id="IPR020596">
    <property type="entry name" value="rRNA_Ade_Mease_Trfase_CS"/>
</dbReference>
<dbReference type="InterPro" id="IPR020598">
    <property type="entry name" value="rRNA_Ade_methylase_Trfase_N"/>
</dbReference>
<dbReference type="InterPro" id="IPR011530">
    <property type="entry name" value="rRNA_adenine_dimethylase"/>
</dbReference>
<dbReference type="InterPro" id="IPR029063">
    <property type="entry name" value="SAM-dependent_MTases_sf"/>
</dbReference>
<dbReference type="NCBIfam" id="TIGR00755">
    <property type="entry name" value="ksgA"/>
    <property type="match status" value="1"/>
</dbReference>
<dbReference type="PANTHER" id="PTHR11727">
    <property type="entry name" value="DIMETHYLADENOSINE TRANSFERASE"/>
    <property type="match status" value="1"/>
</dbReference>
<dbReference type="PANTHER" id="PTHR11727:SF7">
    <property type="entry name" value="DIMETHYLADENOSINE TRANSFERASE-RELATED"/>
    <property type="match status" value="1"/>
</dbReference>
<dbReference type="Pfam" id="PF00398">
    <property type="entry name" value="RrnaAD"/>
    <property type="match status" value="1"/>
</dbReference>
<dbReference type="SMART" id="SM00650">
    <property type="entry name" value="rADc"/>
    <property type="match status" value="1"/>
</dbReference>
<dbReference type="SUPFAM" id="SSF53335">
    <property type="entry name" value="S-adenosyl-L-methionine-dependent methyltransferases"/>
    <property type="match status" value="1"/>
</dbReference>
<dbReference type="PROSITE" id="PS01131">
    <property type="entry name" value="RRNA_A_DIMETH"/>
    <property type="match status" value="1"/>
</dbReference>
<dbReference type="PROSITE" id="PS51689">
    <property type="entry name" value="SAM_RNA_A_N6_MT"/>
    <property type="match status" value="1"/>
</dbReference>
<protein>
    <recommendedName>
        <fullName evidence="1">Ribosomal RNA small subunit methyltransferase A</fullName>
        <ecNumber evidence="1">2.1.1.182</ecNumber>
    </recommendedName>
    <alternativeName>
        <fullName evidence="1">16S rRNA (adenine(1518)-N(6)/adenine(1519)-N(6))-dimethyltransferase</fullName>
    </alternativeName>
    <alternativeName>
        <fullName evidence="1">16S rRNA dimethyladenosine transferase</fullName>
    </alternativeName>
    <alternativeName>
        <fullName evidence="1">16S rRNA dimethylase</fullName>
    </alternativeName>
    <alternativeName>
        <fullName evidence="1">S-adenosylmethionine-6-N', N'-adenosyl(rRNA) dimethyltransferase</fullName>
    </alternativeName>
</protein>
<gene>
    <name evidence="1" type="primary">rsmA</name>
    <name evidence="1" type="synonym">ksgA</name>
    <name type="ordered locus">Sca_0143</name>
</gene>
<evidence type="ECO:0000255" key="1">
    <source>
        <dbReference type="HAMAP-Rule" id="MF_00607"/>
    </source>
</evidence>
<feature type="chain" id="PRO_1000194399" description="Ribosomal RNA small subunit methyltransferase A">
    <location>
        <begin position="1"/>
        <end position="296"/>
    </location>
</feature>
<feature type="binding site" evidence="1">
    <location>
        <position position="30"/>
    </location>
    <ligand>
        <name>S-adenosyl-L-methionine</name>
        <dbReference type="ChEBI" id="CHEBI:59789"/>
    </ligand>
</feature>
<feature type="binding site" evidence="1">
    <location>
        <position position="32"/>
    </location>
    <ligand>
        <name>S-adenosyl-L-methionine</name>
        <dbReference type="ChEBI" id="CHEBI:59789"/>
    </ligand>
</feature>
<feature type="binding site" evidence="1">
    <location>
        <position position="57"/>
    </location>
    <ligand>
        <name>S-adenosyl-L-methionine</name>
        <dbReference type="ChEBI" id="CHEBI:59789"/>
    </ligand>
</feature>
<feature type="binding site" evidence="1">
    <location>
        <position position="78"/>
    </location>
    <ligand>
        <name>S-adenosyl-L-methionine</name>
        <dbReference type="ChEBI" id="CHEBI:59789"/>
    </ligand>
</feature>
<feature type="binding site" evidence="1">
    <location>
        <position position="103"/>
    </location>
    <ligand>
        <name>S-adenosyl-L-methionine</name>
        <dbReference type="ChEBI" id="CHEBI:59789"/>
    </ligand>
</feature>
<feature type="binding site" evidence="1">
    <location>
        <position position="128"/>
    </location>
    <ligand>
        <name>S-adenosyl-L-methionine</name>
        <dbReference type="ChEBI" id="CHEBI:59789"/>
    </ligand>
</feature>
<keyword id="KW-0963">Cytoplasm</keyword>
<keyword id="KW-0489">Methyltransferase</keyword>
<keyword id="KW-1185">Reference proteome</keyword>
<keyword id="KW-0694">RNA-binding</keyword>
<keyword id="KW-0698">rRNA processing</keyword>
<keyword id="KW-0949">S-adenosyl-L-methionine</keyword>
<keyword id="KW-0808">Transferase</keyword>
<proteinExistence type="inferred from homology"/>